<organism>
    <name type="scientific">Klebsiella pneumoniae (strain 342)</name>
    <dbReference type="NCBI Taxonomy" id="507522"/>
    <lineage>
        <taxon>Bacteria</taxon>
        <taxon>Pseudomonadati</taxon>
        <taxon>Pseudomonadota</taxon>
        <taxon>Gammaproteobacteria</taxon>
        <taxon>Enterobacterales</taxon>
        <taxon>Enterobacteriaceae</taxon>
        <taxon>Klebsiella/Raoultella group</taxon>
        <taxon>Klebsiella</taxon>
        <taxon>Klebsiella pneumoniae complex</taxon>
    </lineage>
</organism>
<name>RLMF_KLEP3</name>
<reference key="1">
    <citation type="journal article" date="2008" name="PLoS Genet.">
        <title>Complete genome sequence of the N2-fixing broad host range endophyte Klebsiella pneumoniae 342 and virulence predictions verified in mice.</title>
        <authorList>
            <person name="Fouts D.E."/>
            <person name="Tyler H.L."/>
            <person name="DeBoy R.T."/>
            <person name="Daugherty S."/>
            <person name="Ren Q."/>
            <person name="Badger J.H."/>
            <person name="Durkin A.S."/>
            <person name="Huot H."/>
            <person name="Shrivastava S."/>
            <person name="Kothari S."/>
            <person name="Dodson R.J."/>
            <person name="Mohamoud Y."/>
            <person name="Khouri H."/>
            <person name="Roesch L.F.W."/>
            <person name="Krogfelt K.A."/>
            <person name="Struve C."/>
            <person name="Triplett E.W."/>
            <person name="Methe B.A."/>
        </authorList>
    </citation>
    <scope>NUCLEOTIDE SEQUENCE [LARGE SCALE GENOMIC DNA]</scope>
    <source>
        <strain>342</strain>
    </source>
</reference>
<protein>
    <recommendedName>
        <fullName evidence="1">Ribosomal RNA large subunit methyltransferase F</fullName>
        <ecNumber evidence="1">2.1.1.181</ecNumber>
    </recommendedName>
    <alternativeName>
        <fullName evidence="1">23S rRNA mA1618 methyltransferase</fullName>
    </alternativeName>
    <alternativeName>
        <fullName evidence="1">rRNA adenine N-6-methyltransferase</fullName>
    </alternativeName>
</protein>
<evidence type="ECO:0000255" key="1">
    <source>
        <dbReference type="HAMAP-Rule" id="MF_01848"/>
    </source>
</evidence>
<proteinExistence type="inferred from homology"/>
<feature type="chain" id="PRO_1000188526" description="Ribosomal RNA large subunit methyltransferase F">
    <location>
        <begin position="1"/>
        <end position="304"/>
    </location>
</feature>
<keyword id="KW-0963">Cytoplasm</keyword>
<keyword id="KW-0489">Methyltransferase</keyword>
<keyword id="KW-0698">rRNA processing</keyword>
<keyword id="KW-0949">S-adenosyl-L-methionine</keyword>
<keyword id="KW-0808">Transferase</keyword>
<sequence>MKAQKPGLHPRNRHHQRYDLPALCQAHPDLQGYITLNPLGEQTIDFANPQAVKALNKALLAHFYAVKHWDIPDGFLCPPVPGRADYIHHLADLLAQDSGEVPKQATILDIGTGANLIFPLIGVHEYGWRFTGSEISPEAFASAQAIVNGNPGLTRQIRLRRQKESQAIFHGVIHKNETYDATLCNPPFHDSAESARAGGERKRRNLGLGADSALNFGGQQQELWCEGGEVAFISQMIRESQAFARQVKWFTSLVSRGDNLPPLYRLLTKVGAVKVVKKEMAQGQKQSRFIAWSFMDDAKRRRPF</sequence>
<gene>
    <name evidence="1" type="primary">rlmF</name>
    <name type="ordered locus">KPK_3733</name>
</gene>
<comment type="function">
    <text evidence="1">Specifically methylates the adenine in position 1618 of 23S rRNA.</text>
</comment>
<comment type="catalytic activity">
    <reaction evidence="1">
        <text>adenosine(1618) in 23S rRNA + S-adenosyl-L-methionine = N(6)-methyladenosine(1618) in 23S rRNA + S-adenosyl-L-homocysteine + H(+)</text>
        <dbReference type="Rhea" id="RHEA:16497"/>
        <dbReference type="Rhea" id="RHEA-COMP:10229"/>
        <dbReference type="Rhea" id="RHEA-COMP:10231"/>
        <dbReference type="ChEBI" id="CHEBI:15378"/>
        <dbReference type="ChEBI" id="CHEBI:57856"/>
        <dbReference type="ChEBI" id="CHEBI:59789"/>
        <dbReference type="ChEBI" id="CHEBI:74411"/>
        <dbReference type="ChEBI" id="CHEBI:74449"/>
        <dbReference type="EC" id="2.1.1.181"/>
    </reaction>
</comment>
<comment type="subcellular location">
    <subcellularLocation>
        <location evidence="1">Cytoplasm</location>
    </subcellularLocation>
</comment>
<comment type="similarity">
    <text evidence="1">Belongs to the methyltransferase superfamily. METTL16/RlmF family.</text>
</comment>
<dbReference type="EC" id="2.1.1.181" evidence="1"/>
<dbReference type="EMBL" id="CP000964">
    <property type="protein sequence ID" value="ACI06825.1"/>
    <property type="molecule type" value="Genomic_DNA"/>
</dbReference>
<dbReference type="SMR" id="B5XYT7"/>
<dbReference type="KEGG" id="kpe:KPK_3733"/>
<dbReference type="HOGENOM" id="CLU_027534_3_0_6"/>
<dbReference type="Proteomes" id="UP000001734">
    <property type="component" value="Chromosome"/>
</dbReference>
<dbReference type="GO" id="GO:0005737">
    <property type="term" value="C:cytoplasm"/>
    <property type="evidence" value="ECO:0007669"/>
    <property type="project" value="UniProtKB-SubCell"/>
</dbReference>
<dbReference type="GO" id="GO:0052907">
    <property type="term" value="F:23S rRNA (adenine(1618)-N(6))-methyltransferase activity"/>
    <property type="evidence" value="ECO:0007669"/>
    <property type="project" value="UniProtKB-EC"/>
</dbReference>
<dbReference type="GO" id="GO:0070475">
    <property type="term" value="P:rRNA base methylation"/>
    <property type="evidence" value="ECO:0007669"/>
    <property type="project" value="TreeGrafter"/>
</dbReference>
<dbReference type="CDD" id="cd02440">
    <property type="entry name" value="AdoMet_MTases"/>
    <property type="match status" value="1"/>
</dbReference>
<dbReference type="FunFam" id="3.40.50.150:FF:000045">
    <property type="entry name" value="Ribosomal RNA large subunit methyltransferase F"/>
    <property type="match status" value="1"/>
</dbReference>
<dbReference type="Gene3D" id="3.40.50.150">
    <property type="entry name" value="Vaccinia Virus protein VP39"/>
    <property type="match status" value="1"/>
</dbReference>
<dbReference type="HAMAP" id="MF_01848">
    <property type="entry name" value="23SrRNA_methyltr_F"/>
    <property type="match status" value="1"/>
</dbReference>
<dbReference type="InterPro" id="IPR010286">
    <property type="entry name" value="METTL16/RlmF"/>
</dbReference>
<dbReference type="InterPro" id="IPR016909">
    <property type="entry name" value="rRNA_lsu_MeTfrase_F"/>
</dbReference>
<dbReference type="InterPro" id="IPR029063">
    <property type="entry name" value="SAM-dependent_MTases_sf"/>
</dbReference>
<dbReference type="NCBIfam" id="NF008725">
    <property type="entry name" value="PRK11727.1"/>
    <property type="match status" value="1"/>
</dbReference>
<dbReference type="PANTHER" id="PTHR13393:SF0">
    <property type="entry name" value="RNA N6-ADENOSINE-METHYLTRANSFERASE METTL16"/>
    <property type="match status" value="1"/>
</dbReference>
<dbReference type="PANTHER" id="PTHR13393">
    <property type="entry name" value="SAM-DEPENDENT METHYLTRANSFERASE"/>
    <property type="match status" value="1"/>
</dbReference>
<dbReference type="Pfam" id="PF05971">
    <property type="entry name" value="Methyltransf_10"/>
    <property type="match status" value="1"/>
</dbReference>
<dbReference type="PIRSF" id="PIRSF029038">
    <property type="entry name" value="Mtase_YbiN_prd"/>
    <property type="match status" value="1"/>
</dbReference>
<dbReference type="SUPFAM" id="SSF53335">
    <property type="entry name" value="S-adenosyl-L-methionine-dependent methyltransferases"/>
    <property type="match status" value="1"/>
</dbReference>
<accession>B5XYT7</accession>